<dbReference type="EC" id="2.4.1.13"/>
<dbReference type="EMBL" id="HQ895722">
    <property type="protein sequence ID" value="AEX32877.1"/>
    <property type="molecule type" value="mRNA"/>
</dbReference>
<dbReference type="EMBL" id="DP000009">
    <property type="protein sequence ID" value="ABF95853.1"/>
    <property type="molecule type" value="Genomic_DNA"/>
</dbReference>
<dbReference type="EMBL" id="AP008209">
    <property type="protein sequence ID" value="BAF11978.1"/>
    <property type="molecule type" value="Genomic_DNA"/>
</dbReference>
<dbReference type="EMBL" id="AP014959">
    <property type="protein sequence ID" value="BAS84118.1"/>
    <property type="molecule type" value="Genomic_DNA"/>
</dbReference>
<dbReference type="EMBL" id="CM000140">
    <property type="protein sequence ID" value="EAZ26864.1"/>
    <property type="molecule type" value="Genomic_DNA"/>
</dbReference>
<dbReference type="EMBL" id="AK099406">
    <property type="protein sequence ID" value="BAG94112.1"/>
    <property type="molecule type" value="mRNA"/>
</dbReference>
<dbReference type="EMBL" id="AK102158">
    <property type="protein sequence ID" value="BAG95417.1"/>
    <property type="molecule type" value="mRNA"/>
</dbReference>
<dbReference type="RefSeq" id="XP_015632177.1">
    <property type="nucleotide sequence ID" value="XM_015776691.1"/>
</dbReference>
<dbReference type="SMR" id="Q10LP5"/>
<dbReference type="FunCoup" id="Q10LP5">
    <property type="interactions" value="171"/>
</dbReference>
<dbReference type="STRING" id="39947.Q10LP5"/>
<dbReference type="CAZy" id="GT4">
    <property type="family name" value="Glycosyltransferase Family 4"/>
</dbReference>
<dbReference type="PaxDb" id="39947-Q10LP5"/>
<dbReference type="EnsemblPlants" id="Os03t0340500-01">
    <property type="protein sequence ID" value="Os03t0340500-01"/>
    <property type="gene ID" value="Os03g0340500"/>
</dbReference>
<dbReference type="Gramene" id="Os03t0340500-01">
    <property type="protein sequence ID" value="Os03t0340500-01"/>
    <property type="gene ID" value="Os03g0340500"/>
</dbReference>
<dbReference type="KEGG" id="dosa:Os03g0340500"/>
<dbReference type="eggNOG" id="KOG0853">
    <property type="taxonomic scope" value="Eukaryota"/>
</dbReference>
<dbReference type="HOGENOM" id="CLU_019158_1_0_1"/>
<dbReference type="InParanoid" id="Q10LP5"/>
<dbReference type="OMA" id="HGWFGQE"/>
<dbReference type="OrthoDB" id="937291at2759"/>
<dbReference type="BRENDA" id="2.4.1.13">
    <property type="organism ID" value="4460"/>
</dbReference>
<dbReference type="PlantReactome" id="R-OSA-1119452">
    <property type="pathway name" value="Galactose degradation II"/>
</dbReference>
<dbReference type="PlantReactome" id="R-OSA-1119465">
    <property type="pathway name" value="Sucrose biosynthesis"/>
</dbReference>
<dbReference type="Proteomes" id="UP000000763">
    <property type="component" value="Chromosome 3"/>
</dbReference>
<dbReference type="Proteomes" id="UP000007752">
    <property type="component" value="Chromosome 3"/>
</dbReference>
<dbReference type="Proteomes" id="UP000059680">
    <property type="component" value="Chromosome 3"/>
</dbReference>
<dbReference type="ExpressionAtlas" id="Q10LP5">
    <property type="expression patterns" value="baseline and differential"/>
</dbReference>
<dbReference type="GO" id="GO:0016157">
    <property type="term" value="F:sucrose synthase activity"/>
    <property type="evidence" value="ECO:0000318"/>
    <property type="project" value="GO_Central"/>
</dbReference>
<dbReference type="GO" id="GO:0005985">
    <property type="term" value="P:sucrose metabolic process"/>
    <property type="evidence" value="ECO:0007669"/>
    <property type="project" value="InterPro"/>
</dbReference>
<dbReference type="FunFam" id="1.20.120.1230:FF:000001">
    <property type="entry name" value="Sucrose synthase"/>
    <property type="match status" value="1"/>
</dbReference>
<dbReference type="FunFam" id="3.10.450.330:FF:000001">
    <property type="entry name" value="Sucrose synthase"/>
    <property type="match status" value="1"/>
</dbReference>
<dbReference type="FunFam" id="3.40.50.2000:FF:000006">
    <property type="entry name" value="Sucrose synthase"/>
    <property type="match status" value="1"/>
</dbReference>
<dbReference type="FunFam" id="3.40.50.2000:FF:000549">
    <property type="entry name" value="Sucrose synthase 3"/>
    <property type="match status" value="1"/>
</dbReference>
<dbReference type="Gene3D" id="1.20.120.1230">
    <property type="match status" value="1"/>
</dbReference>
<dbReference type="Gene3D" id="3.10.450.330">
    <property type="match status" value="1"/>
</dbReference>
<dbReference type="Gene3D" id="3.40.50.2000">
    <property type="entry name" value="Glycogen Phosphorylase B"/>
    <property type="match status" value="2"/>
</dbReference>
<dbReference type="InterPro" id="IPR001296">
    <property type="entry name" value="Glyco_trans_1"/>
</dbReference>
<dbReference type="InterPro" id="IPR000368">
    <property type="entry name" value="Sucrose_synth_GT-B1"/>
</dbReference>
<dbReference type="InterPro" id="IPR012820">
    <property type="entry name" value="Sucrose_synthase_pln/cyn"/>
</dbReference>
<dbReference type="InterPro" id="IPR056736">
    <property type="entry name" value="SUS_EPBD"/>
</dbReference>
<dbReference type="InterPro" id="IPR056735">
    <property type="entry name" value="SUS_N"/>
</dbReference>
<dbReference type="NCBIfam" id="TIGR02470">
    <property type="entry name" value="sucr_synth"/>
    <property type="match status" value="1"/>
</dbReference>
<dbReference type="PANTHER" id="PTHR45839">
    <property type="match status" value="1"/>
</dbReference>
<dbReference type="PANTHER" id="PTHR45839:SF13">
    <property type="entry name" value="SUCROSE SYNTHASE 3"/>
    <property type="match status" value="1"/>
</dbReference>
<dbReference type="Pfam" id="PF00534">
    <property type="entry name" value="Glycos_transf_1"/>
    <property type="match status" value="1"/>
</dbReference>
<dbReference type="Pfam" id="PF00862">
    <property type="entry name" value="GT-B_Sucrose_synth"/>
    <property type="match status" value="1"/>
</dbReference>
<dbReference type="Pfam" id="PF24862">
    <property type="entry name" value="SUS_EPBD"/>
    <property type="match status" value="1"/>
</dbReference>
<dbReference type="Pfam" id="PF24861">
    <property type="entry name" value="SUS_N"/>
    <property type="match status" value="1"/>
</dbReference>
<dbReference type="SUPFAM" id="SSF53756">
    <property type="entry name" value="UDP-Glycosyltransferase/glycogen phosphorylase"/>
    <property type="match status" value="1"/>
</dbReference>
<proteinExistence type="evidence at transcript level"/>
<organism>
    <name type="scientific">Oryza sativa subsp. japonica</name>
    <name type="common">Rice</name>
    <dbReference type="NCBI Taxonomy" id="39947"/>
    <lineage>
        <taxon>Eukaryota</taxon>
        <taxon>Viridiplantae</taxon>
        <taxon>Streptophyta</taxon>
        <taxon>Embryophyta</taxon>
        <taxon>Tracheophyta</taxon>
        <taxon>Spermatophyta</taxon>
        <taxon>Magnoliopsida</taxon>
        <taxon>Liliopsida</taxon>
        <taxon>Poales</taxon>
        <taxon>Poaceae</taxon>
        <taxon>BOP clade</taxon>
        <taxon>Oryzoideae</taxon>
        <taxon>Oryzeae</taxon>
        <taxon>Oryzinae</taxon>
        <taxon>Oryza</taxon>
        <taxon>Oryza sativa</taxon>
    </lineage>
</organism>
<gene>
    <name type="primary">SUS4</name>
    <name type="ordered locus">Os03g0340500</name>
    <name type="ordered locus">LOC_Os03g22120</name>
    <name type="ORF">OsJ_10783</name>
</gene>
<name>SUS4_ORYSJ</name>
<accession>Q10LP5</accession>
<reference key="1">
    <citation type="journal article" date="2011" name="Mol. Cells">
        <title>Identification and characterization of the duplicate rice sucrose synthase genes OsSUS5 and OsSUS7 which are associated with the plasma membrane.</title>
        <authorList>
            <person name="Cho J.I."/>
            <person name="Kim H.B."/>
            <person name="Kim C.Y."/>
            <person name="Hahn T.R."/>
            <person name="Jeon J.S."/>
        </authorList>
    </citation>
    <scope>NUCLEOTIDE SEQUENCE [MRNA]</scope>
    <scope>GENE FAMILY</scope>
    <scope>TISSUE SPECIFICITY</scope>
    <scope>DEVELOPMENTAL STAGE</scope>
    <source>
        <strain>cv. Nipponbare</strain>
    </source>
</reference>
<reference key="2">
    <citation type="journal article" date="2005" name="Genome Res.">
        <title>Sequence, annotation, and analysis of synteny between rice chromosome 3 and diverged grass species.</title>
        <authorList>
            <consortium name="The rice chromosome 3 sequencing consortium"/>
            <person name="Buell C.R."/>
            <person name="Yuan Q."/>
            <person name="Ouyang S."/>
            <person name="Liu J."/>
            <person name="Zhu W."/>
            <person name="Wang A."/>
            <person name="Maiti R."/>
            <person name="Haas B."/>
            <person name="Wortman J."/>
            <person name="Pertea M."/>
            <person name="Jones K.M."/>
            <person name="Kim M."/>
            <person name="Overton L."/>
            <person name="Tsitrin T."/>
            <person name="Fadrosh D."/>
            <person name="Bera J."/>
            <person name="Weaver B."/>
            <person name="Jin S."/>
            <person name="Johri S."/>
            <person name="Reardon M."/>
            <person name="Webb K."/>
            <person name="Hill J."/>
            <person name="Moffat K."/>
            <person name="Tallon L."/>
            <person name="Van Aken S."/>
            <person name="Lewis M."/>
            <person name="Utterback T."/>
            <person name="Feldblyum T."/>
            <person name="Zismann V."/>
            <person name="Iobst S."/>
            <person name="Hsiao J."/>
            <person name="de Vazeille A.R."/>
            <person name="Salzberg S.L."/>
            <person name="White O."/>
            <person name="Fraser C.M."/>
            <person name="Yu Y."/>
            <person name="Kim H."/>
            <person name="Rambo T."/>
            <person name="Currie J."/>
            <person name="Collura K."/>
            <person name="Kernodle-Thompson S."/>
            <person name="Wei F."/>
            <person name="Kudrna K."/>
            <person name="Ammiraju J.S.S."/>
            <person name="Luo M."/>
            <person name="Goicoechea J.L."/>
            <person name="Wing R.A."/>
            <person name="Henry D."/>
            <person name="Oates R."/>
            <person name="Palmer M."/>
            <person name="Pries G."/>
            <person name="Saski C."/>
            <person name="Simmons J."/>
            <person name="Soderlund C."/>
            <person name="Nelson W."/>
            <person name="de la Bastide M."/>
            <person name="Spiegel L."/>
            <person name="Nascimento L."/>
            <person name="Huang E."/>
            <person name="Preston R."/>
            <person name="Zutavern T."/>
            <person name="Palmer L."/>
            <person name="O'Shaughnessy A."/>
            <person name="Dike S."/>
            <person name="McCombie W.R."/>
            <person name="Minx P."/>
            <person name="Cordum H."/>
            <person name="Wilson R."/>
            <person name="Jin W."/>
            <person name="Lee H.R."/>
            <person name="Jiang J."/>
            <person name="Jackson S."/>
        </authorList>
    </citation>
    <scope>NUCLEOTIDE SEQUENCE [LARGE SCALE GENOMIC DNA]</scope>
    <source>
        <strain>cv. Nipponbare</strain>
    </source>
</reference>
<reference key="3">
    <citation type="journal article" date="2005" name="Nature">
        <title>The map-based sequence of the rice genome.</title>
        <authorList>
            <consortium name="International rice genome sequencing project (IRGSP)"/>
        </authorList>
    </citation>
    <scope>NUCLEOTIDE SEQUENCE [LARGE SCALE GENOMIC DNA]</scope>
    <source>
        <strain>cv. Nipponbare</strain>
    </source>
</reference>
<reference key="4">
    <citation type="journal article" date="2008" name="Nucleic Acids Res.">
        <title>The rice annotation project database (RAP-DB): 2008 update.</title>
        <authorList>
            <consortium name="The rice annotation project (RAP)"/>
        </authorList>
    </citation>
    <scope>GENOME REANNOTATION</scope>
    <source>
        <strain>cv. Nipponbare</strain>
    </source>
</reference>
<reference key="5">
    <citation type="journal article" date="2013" name="Rice">
        <title>Improvement of the Oryza sativa Nipponbare reference genome using next generation sequence and optical map data.</title>
        <authorList>
            <person name="Kawahara Y."/>
            <person name="de la Bastide M."/>
            <person name="Hamilton J.P."/>
            <person name="Kanamori H."/>
            <person name="McCombie W.R."/>
            <person name="Ouyang S."/>
            <person name="Schwartz D.C."/>
            <person name="Tanaka T."/>
            <person name="Wu J."/>
            <person name="Zhou S."/>
            <person name="Childs K.L."/>
            <person name="Davidson R.M."/>
            <person name="Lin H."/>
            <person name="Quesada-Ocampo L."/>
            <person name="Vaillancourt B."/>
            <person name="Sakai H."/>
            <person name="Lee S.S."/>
            <person name="Kim J."/>
            <person name="Numa H."/>
            <person name="Itoh T."/>
            <person name="Buell C.R."/>
            <person name="Matsumoto T."/>
        </authorList>
    </citation>
    <scope>GENOME REANNOTATION</scope>
    <source>
        <strain>cv. Nipponbare</strain>
    </source>
</reference>
<reference key="6">
    <citation type="journal article" date="2005" name="PLoS Biol.">
        <title>The genomes of Oryza sativa: a history of duplications.</title>
        <authorList>
            <person name="Yu J."/>
            <person name="Wang J."/>
            <person name="Lin W."/>
            <person name="Li S."/>
            <person name="Li H."/>
            <person name="Zhou J."/>
            <person name="Ni P."/>
            <person name="Dong W."/>
            <person name="Hu S."/>
            <person name="Zeng C."/>
            <person name="Zhang J."/>
            <person name="Zhang Y."/>
            <person name="Li R."/>
            <person name="Xu Z."/>
            <person name="Li S."/>
            <person name="Li X."/>
            <person name="Zheng H."/>
            <person name="Cong L."/>
            <person name="Lin L."/>
            <person name="Yin J."/>
            <person name="Geng J."/>
            <person name="Li G."/>
            <person name="Shi J."/>
            <person name="Liu J."/>
            <person name="Lv H."/>
            <person name="Li J."/>
            <person name="Wang J."/>
            <person name="Deng Y."/>
            <person name="Ran L."/>
            <person name="Shi X."/>
            <person name="Wang X."/>
            <person name="Wu Q."/>
            <person name="Li C."/>
            <person name="Ren X."/>
            <person name="Wang J."/>
            <person name="Wang X."/>
            <person name="Li D."/>
            <person name="Liu D."/>
            <person name="Zhang X."/>
            <person name="Ji Z."/>
            <person name="Zhao W."/>
            <person name="Sun Y."/>
            <person name="Zhang Z."/>
            <person name="Bao J."/>
            <person name="Han Y."/>
            <person name="Dong L."/>
            <person name="Ji J."/>
            <person name="Chen P."/>
            <person name="Wu S."/>
            <person name="Liu J."/>
            <person name="Xiao Y."/>
            <person name="Bu D."/>
            <person name="Tan J."/>
            <person name="Yang L."/>
            <person name="Ye C."/>
            <person name="Zhang J."/>
            <person name="Xu J."/>
            <person name="Zhou Y."/>
            <person name="Yu Y."/>
            <person name="Zhang B."/>
            <person name="Zhuang S."/>
            <person name="Wei H."/>
            <person name="Liu B."/>
            <person name="Lei M."/>
            <person name="Yu H."/>
            <person name="Li Y."/>
            <person name="Xu H."/>
            <person name="Wei S."/>
            <person name="He X."/>
            <person name="Fang L."/>
            <person name="Zhang Z."/>
            <person name="Zhang Y."/>
            <person name="Huang X."/>
            <person name="Su Z."/>
            <person name="Tong W."/>
            <person name="Li J."/>
            <person name="Tong Z."/>
            <person name="Li S."/>
            <person name="Ye J."/>
            <person name="Wang L."/>
            <person name="Fang L."/>
            <person name="Lei T."/>
            <person name="Chen C.-S."/>
            <person name="Chen H.-C."/>
            <person name="Xu Z."/>
            <person name="Li H."/>
            <person name="Huang H."/>
            <person name="Zhang F."/>
            <person name="Xu H."/>
            <person name="Li N."/>
            <person name="Zhao C."/>
            <person name="Li S."/>
            <person name="Dong L."/>
            <person name="Huang Y."/>
            <person name="Li L."/>
            <person name="Xi Y."/>
            <person name="Qi Q."/>
            <person name="Li W."/>
            <person name="Zhang B."/>
            <person name="Hu W."/>
            <person name="Zhang Y."/>
            <person name="Tian X."/>
            <person name="Jiao Y."/>
            <person name="Liang X."/>
            <person name="Jin J."/>
            <person name="Gao L."/>
            <person name="Zheng W."/>
            <person name="Hao B."/>
            <person name="Liu S.-M."/>
            <person name="Wang W."/>
            <person name="Yuan L."/>
            <person name="Cao M."/>
            <person name="McDermott J."/>
            <person name="Samudrala R."/>
            <person name="Wang J."/>
            <person name="Wong G.K.-S."/>
            <person name="Yang H."/>
        </authorList>
    </citation>
    <scope>NUCLEOTIDE SEQUENCE [LARGE SCALE GENOMIC DNA]</scope>
    <source>
        <strain>cv. Nipponbare</strain>
    </source>
</reference>
<reference key="7">
    <citation type="journal article" date="2003" name="Science">
        <title>Collection, mapping, and annotation of over 28,000 cDNA clones from japonica rice.</title>
        <authorList>
            <consortium name="The rice full-length cDNA consortium"/>
        </authorList>
    </citation>
    <scope>NUCLEOTIDE SEQUENCE [LARGE SCALE MRNA]</scope>
    <source>
        <strain>cv. Nipponbare</strain>
    </source>
</reference>
<reference key="8">
    <citation type="journal article" date="2008" name="Plant Sci.">
        <title>An expression analysis profile for the entire sucrose synthase gene family in rice.</title>
        <authorList>
            <person name="Hirose T."/>
            <person name="Scofield G.N."/>
            <person name="Terao T."/>
        </authorList>
    </citation>
    <scope>GENE FAMILY</scope>
    <scope>TISSUE SPECIFICITY</scope>
</reference>
<comment type="function">
    <text evidence="1">Sucrose-cleaving enzyme that provides UDP-glucose and fructose for various metabolic pathways.</text>
</comment>
<comment type="catalytic activity">
    <reaction>
        <text>an NDP-alpha-D-glucose + D-fructose = a ribonucleoside 5'-diphosphate + sucrose + H(+)</text>
        <dbReference type="Rhea" id="RHEA:16241"/>
        <dbReference type="ChEBI" id="CHEBI:15378"/>
        <dbReference type="ChEBI" id="CHEBI:17992"/>
        <dbReference type="ChEBI" id="CHEBI:37721"/>
        <dbReference type="ChEBI" id="CHEBI:57930"/>
        <dbReference type="ChEBI" id="CHEBI:76533"/>
        <dbReference type="EC" id="2.4.1.13"/>
    </reaction>
</comment>
<comment type="tissue specificity">
    <text evidence="2 3">Predominantly expressed in the leaf tissues and in caryopses.</text>
</comment>
<comment type="developmental stage">
    <text evidence="2">In the caryopse, slightly expressed during the middle storage phase and was strongly expressed at the later storage phase.</text>
</comment>
<comment type="similarity">
    <text evidence="4">Belongs to the glycosyltransferase 1 family. Plant sucrose synthase subfamily.</text>
</comment>
<feature type="chain" id="PRO_0000418806" description="Sucrose synthase 4">
    <location>
        <begin position="1"/>
        <end position="809"/>
    </location>
</feature>
<feature type="region of interest" description="GT-B glycosyltransferase" evidence="1">
    <location>
        <begin position="275"/>
        <end position="753"/>
    </location>
</feature>
<evidence type="ECO:0000250" key="1"/>
<evidence type="ECO:0000269" key="2">
    <source>
    </source>
</evidence>
<evidence type="ECO:0000269" key="3">
    <source ref="8"/>
</evidence>
<evidence type="ECO:0000305" key="4"/>
<sequence>MSGPKLDRTPSIRDRVEDTLHAHRNELVALLSKYVSQGKGILQPHHILDALDEVQSSGGRALVEGPFLDVLRSAQEAIVLPPFVAIAVRPRPGVWEYVRVNVHELSVEQLTVSEYLRFKEELVDGQYNDPYILELDFEPFNASVPRPNRSSSIGNGVQFLNRHLSSIMFRNKDCLEPLLDFLRGHRHKGHVMMLNDRIQSLGRLQSVLTKAEEHLSKLPADTPYSQFAYKFQEWGLEKGWGDTAGYVLEMIHLLLDVLQAPDPSTLETFLGRIPMIFNVVVVSPHGYFGQANVLGLPDTGGQIVYILDQVRALENEMVLRLKKQGLDFTPKILIVTRLIPEAKGTSCNQRLERISGTQHTYILRVPFRNENGILRKWISRFDVWPYLEKFAEDAAGEIAAELQGTPDFIIGNYSDGNLVASLLSYKMGITQCNIAHALEKTKYPDSDIYWTKYDEKYHFSCQFTADIIAMNNADFIITSTYQEIAGSKNTVGQYESHTAFTLPGLYRIVHGIDVFDPKFNIVSPGADMSIYFPYTEKAKRLTSLHGSLENLISDPEQNDEHIGHLDDRSKPILFSMARLDRVKNITGLVEAYAKNARLRELVNLVVVAGYNDVKKSKDREEIAEIEKMHELIKTYNLFGQFRWISAQTNRARNGELYRYIADTHGAFVQPAFYEAFGLTVVEAMTCGLPTFATVHGGPAEIIEHGISGFHIDPYHPDQAANLIADFFEQCKQDPNHWVEVSNRGLQRIYEKYTWKIYSERLMTLAGVYGFWKYVSKLERRETRRYLEMFYILKFRELAKTVPLAVDEAH</sequence>
<keyword id="KW-0328">Glycosyltransferase</keyword>
<keyword id="KW-1185">Reference proteome</keyword>
<keyword id="KW-0808">Transferase</keyword>
<protein>
    <recommendedName>
        <fullName>Sucrose synthase 4</fullName>
        <shortName>OsSUS4</shortName>
        <ecNumber>2.4.1.13</ecNumber>
    </recommendedName>
    <alternativeName>
        <fullName>Sucrose-UDP glucosyltransferase 4</fullName>
    </alternativeName>
</protein>